<comment type="function">
    <text evidence="1">Catalyzes the radical-mediated insertion of two sulfur atoms into the C-6 and C-8 positions of the octanoyl moiety bound to the lipoyl domains of lipoate-dependent enzymes, thereby converting the octanoylated domains into lipoylated derivatives.</text>
</comment>
<comment type="catalytic activity">
    <reaction evidence="1">
        <text>[[Fe-S] cluster scaffold protein carrying a second [4Fe-4S](2+) cluster] + N(6)-octanoyl-L-lysyl-[protein] + 2 oxidized [2Fe-2S]-[ferredoxin] + 2 S-adenosyl-L-methionine + 4 H(+) = [[Fe-S] cluster scaffold protein] + N(6)-[(R)-dihydrolipoyl]-L-lysyl-[protein] + 4 Fe(3+) + 2 hydrogen sulfide + 2 5'-deoxyadenosine + 2 L-methionine + 2 reduced [2Fe-2S]-[ferredoxin]</text>
        <dbReference type="Rhea" id="RHEA:16585"/>
        <dbReference type="Rhea" id="RHEA-COMP:9928"/>
        <dbReference type="Rhea" id="RHEA-COMP:10000"/>
        <dbReference type="Rhea" id="RHEA-COMP:10001"/>
        <dbReference type="Rhea" id="RHEA-COMP:10475"/>
        <dbReference type="Rhea" id="RHEA-COMP:14568"/>
        <dbReference type="Rhea" id="RHEA-COMP:14569"/>
        <dbReference type="ChEBI" id="CHEBI:15378"/>
        <dbReference type="ChEBI" id="CHEBI:17319"/>
        <dbReference type="ChEBI" id="CHEBI:29034"/>
        <dbReference type="ChEBI" id="CHEBI:29919"/>
        <dbReference type="ChEBI" id="CHEBI:33722"/>
        <dbReference type="ChEBI" id="CHEBI:33737"/>
        <dbReference type="ChEBI" id="CHEBI:33738"/>
        <dbReference type="ChEBI" id="CHEBI:57844"/>
        <dbReference type="ChEBI" id="CHEBI:59789"/>
        <dbReference type="ChEBI" id="CHEBI:78809"/>
        <dbReference type="ChEBI" id="CHEBI:83100"/>
        <dbReference type="EC" id="2.8.1.8"/>
    </reaction>
</comment>
<comment type="cofactor">
    <cofactor evidence="1">
        <name>[4Fe-4S] cluster</name>
        <dbReference type="ChEBI" id="CHEBI:49883"/>
    </cofactor>
    <text evidence="1">Binds 2 [4Fe-4S] clusters per subunit. One cluster is coordinated with 3 cysteines and an exchangeable S-adenosyl-L-methionine.</text>
</comment>
<comment type="pathway">
    <text evidence="1">Protein modification; protein lipoylation via endogenous pathway; protein N(6)-(lipoyl)lysine from octanoyl-[acyl-carrier-protein]: step 2/2.</text>
</comment>
<comment type="subcellular location">
    <subcellularLocation>
        <location evidence="1">Mitochondrion</location>
    </subcellularLocation>
</comment>
<comment type="miscellaneous">
    <text evidence="1">This protein may be expected to contain an N-terminal transit peptide but none has been predicted.</text>
</comment>
<comment type="similarity">
    <text evidence="1">Belongs to the radical SAM superfamily. Lipoyl synthase family.</text>
</comment>
<evidence type="ECO:0000255" key="1">
    <source>
        <dbReference type="HAMAP-Rule" id="MF_03123"/>
    </source>
</evidence>
<evidence type="ECO:0000255" key="2">
    <source>
        <dbReference type="PROSITE-ProRule" id="PRU01266"/>
    </source>
</evidence>
<dbReference type="EC" id="2.8.1.8" evidence="1"/>
<dbReference type="EMBL" id="FR796415">
    <property type="protein sequence ID" value="CAJ07120.1"/>
    <property type="molecule type" value="Genomic_DNA"/>
</dbReference>
<dbReference type="RefSeq" id="XP_001682612.1">
    <property type="nucleotide sequence ID" value="XM_001682560.1"/>
</dbReference>
<dbReference type="SMR" id="Q4QDI6"/>
<dbReference type="FunCoup" id="Q4QDI6">
    <property type="interactions" value="194"/>
</dbReference>
<dbReference type="STRING" id="5664.Q4QDI6"/>
<dbReference type="EnsemblProtists" id="CAJ07120">
    <property type="protein sequence ID" value="CAJ07120"/>
    <property type="gene ID" value="LMJF_19_0350"/>
</dbReference>
<dbReference type="GeneID" id="5651134"/>
<dbReference type="KEGG" id="lma:LMJF_19_0350"/>
<dbReference type="VEuPathDB" id="TriTrypDB:LmjF.19.0350"/>
<dbReference type="VEuPathDB" id="TriTrypDB:LMJFC_190009400"/>
<dbReference type="VEuPathDB" id="TriTrypDB:LMJLV39_190008700"/>
<dbReference type="VEuPathDB" id="TriTrypDB:LMJSD75_190008600"/>
<dbReference type="eggNOG" id="KOG2672">
    <property type="taxonomic scope" value="Eukaryota"/>
</dbReference>
<dbReference type="InParanoid" id="Q4QDI6"/>
<dbReference type="OMA" id="PYCDIDF"/>
<dbReference type="UniPathway" id="UPA00538">
    <property type="reaction ID" value="UER00593"/>
</dbReference>
<dbReference type="Proteomes" id="UP000000542">
    <property type="component" value="Chromosome 19"/>
</dbReference>
<dbReference type="GO" id="GO:0020023">
    <property type="term" value="C:kinetoplast"/>
    <property type="evidence" value="ECO:0000266"/>
    <property type="project" value="GeneDB"/>
</dbReference>
<dbReference type="GO" id="GO:0005739">
    <property type="term" value="C:mitochondrion"/>
    <property type="evidence" value="ECO:0000266"/>
    <property type="project" value="GeneDB"/>
</dbReference>
<dbReference type="GO" id="GO:0051539">
    <property type="term" value="F:4 iron, 4 sulfur cluster binding"/>
    <property type="evidence" value="ECO:0007669"/>
    <property type="project" value="UniProtKB-UniRule"/>
</dbReference>
<dbReference type="GO" id="GO:0016992">
    <property type="term" value="F:lipoate synthase activity"/>
    <property type="evidence" value="ECO:0000318"/>
    <property type="project" value="GO_Central"/>
</dbReference>
<dbReference type="GO" id="GO:0046872">
    <property type="term" value="F:metal ion binding"/>
    <property type="evidence" value="ECO:0007669"/>
    <property type="project" value="UniProtKB-KW"/>
</dbReference>
<dbReference type="GO" id="GO:0009107">
    <property type="term" value="P:lipoate biosynthetic process"/>
    <property type="evidence" value="ECO:0000318"/>
    <property type="project" value="GO_Central"/>
</dbReference>
<dbReference type="FunFam" id="3.20.20.70:FF:000306">
    <property type="entry name" value="Lipoyl synthase, mitochondrial"/>
    <property type="match status" value="1"/>
</dbReference>
<dbReference type="Gene3D" id="3.20.20.70">
    <property type="entry name" value="Aldolase class I"/>
    <property type="match status" value="1"/>
</dbReference>
<dbReference type="HAMAP" id="MF_00206">
    <property type="entry name" value="Lipoyl_synth"/>
    <property type="match status" value="1"/>
</dbReference>
<dbReference type="InterPro" id="IPR013785">
    <property type="entry name" value="Aldolase_TIM"/>
</dbReference>
<dbReference type="InterPro" id="IPR006638">
    <property type="entry name" value="Elp3/MiaA/NifB-like_rSAM"/>
</dbReference>
<dbReference type="InterPro" id="IPR031691">
    <property type="entry name" value="LIAS_N"/>
</dbReference>
<dbReference type="InterPro" id="IPR003698">
    <property type="entry name" value="Lipoyl_synth"/>
</dbReference>
<dbReference type="InterPro" id="IPR007197">
    <property type="entry name" value="rSAM"/>
</dbReference>
<dbReference type="NCBIfam" id="TIGR00510">
    <property type="entry name" value="lipA"/>
    <property type="match status" value="1"/>
</dbReference>
<dbReference type="NCBIfam" id="NF004019">
    <property type="entry name" value="PRK05481.1"/>
    <property type="match status" value="1"/>
</dbReference>
<dbReference type="NCBIfam" id="NF009544">
    <property type="entry name" value="PRK12928.1"/>
    <property type="match status" value="1"/>
</dbReference>
<dbReference type="PANTHER" id="PTHR10949">
    <property type="entry name" value="LIPOYL SYNTHASE"/>
    <property type="match status" value="1"/>
</dbReference>
<dbReference type="PANTHER" id="PTHR10949:SF0">
    <property type="entry name" value="LIPOYL SYNTHASE, MITOCHONDRIAL"/>
    <property type="match status" value="1"/>
</dbReference>
<dbReference type="Pfam" id="PF16881">
    <property type="entry name" value="LIAS_N"/>
    <property type="match status" value="1"/>
</dbReference>
<dbReference type="Pfam" id="PF04055">
    <property type="entry name" value="Radical_SAM"/>
    <property type="match status" value="1"/>
</dbReference>
<dbReference type="SFLD" id="SFLDF00271">
    <property type="entry name" value="lipoyl_synthase"/>
    <property type="match status" value="1"/>
</dbReference>
<dbReference type="SFLD" id="SFLDS00029">
    <property type="entry name" value="Radical_SAM"/>
    <property type="match status" value="1"/>
</dbReference>
<dbReference type="SMART" id="SM00729">
    <property type="entry name" value="Elp3"/>
    <property type="match status" value="1"/>
</dbReference>
<dbReference type="SUPFAM" id="SSF102114">
    <property type="entry name" value="Radical SAM enzymes"/>
    <property type="match status" value="1"/>
</dbReference>
<dbReference type="PROSITE" id="PS51918">
    <property type="entry name" value="RADICAL_SAM"/>
    <property type="match status" value="1"/>
</dbReference>
<name>LIPA_LEIMA</name>
<keyword id="KW-0004">4Fe-4S</keyword>
<keyword id="KW-0408">Iron</keyword>
<keyword id="KW-0411">Iron-sulfur</keyword>
<keyword id="KW-0479">Metal-binding</keyword>
<keyword id="KW-0496">Mitochondrion</keyword>
<keyword id="KW-1185">Reference proteome</keyword>
<keyword id="KW-0949">S-adenosyl-L-methionine</keyword>
<keyword id="KW-0808">Transferase</keyword>
<organism>
    <name type="scientific">Leishmania major</name>
    <dbReference type="NCBI Taxonomy" id="5664"/>
    <lineage>
        <taxon>Eukaryota</taxon>
        <taxon>Discoba</taxon>
        <taxon>Euglenozoa</taxon>
        <taxon>Kinetoplastea</taxon>
        <taxon>Metakinetoplastina</taxon>
        <taxon>Trypanosomatida</taxon>
        <taxon>Trypanosomatidae</taxon>
        <taxon>Leishmaniinae</taxon>
        <taxon>Leishmania</taxon>
    </lineage>
</organism>
<gene>
    <name type="ORF">LmjF19.0350</name>
    <name type="ORF">LmjF_19_0350</name>
</gene>
<reference key="1">
    <citation type="journal article" date="2005" name="Science">
        <title>The genome of the kinetoplastid parasite, Leishmania major.</title>
        <authorList>
            <person name="Ivens A.C."/>
            <person name="Peacock C.S."/>
            <person name="Worthey E.A."/>
            <person name="Murphy L."/>
            <person name="Aggarwal G."/>
            <person name="Berriman M."/>
            <person name="Sisk E."/>
            <person name="Rajandream M.A."/>
            <person name="Adlem E."/>
            <person name="Aert R."/>
            <person name="Anupama A."/>
            <person name="Apostolou Z."/>
            <person name="Attipoe P."/>
            <person name="Bason N."/>
            <person name="Bauser C."/>
            <person name="Beck A."/>
            <person name="Beverley S.M."/>
            <person name="Bianchettin G."/>
            <person name="Borzym K."/>
            <person name="Bothe G."/>
            <person name="Bruschi C.V."/>
            <person name="Collins M."/>
            <person name="Cadag E."/>
            <person name="Ciarloni L."/>
            <person name="Clayton C."/>
            <person name="Coulson R.M.R."/>
            <person name="Cronin A."/>
            <person name="Cruz A.K."/>
            <person name="Davies R.M."/>
            <person name="De Gaudenzi J."/>
            <person name="Dobson D.E."/>
            <person name="Duesterhoeft A."/>
            <person name="Fazelina G."/>
            <person name="Fosker N."/>
            <person name="Frasch A.C."/>
            <person name="Fraser A."/>
            <person name="Fuchs M."/>
            <person name="Gabel C."/>
            <person name="Goble A."/>
            <person name="Goffeau A."/>
            <person name="Harris D."/>
            <person name="Hertz-Fowler C."/>
            <person name="Hilbert H."/>
            <person name="Horn D."/>
            <person name="Huang Y."/>
            <person name="Klages S."/>
            <person name="Knights A."/>
            <person name="Kube M."/>
            <person name="Larke N."/>
            <person name="Litvin L."/>
            <person name="Lord A."/>
            <person name="Louie T."/>
            <person name="Marra M."/>
            <person name="Masuy D."/>
            <person name="Matthews K."/>
            <person name="Michaeli S."/>
            <person name="Mottram J.C."/>
            <person name="Mueller-Auer S."/>
            <person name="Munden H."/>
            <person name="Nelson S."/>
            <person name="Norbertczak H."/>
            <person name="Oliver K."/>
            <person name="O'neil S."/>
            <person name="Pentony M."/>
            <person name="Pohl T.M."/>
            <person name="Price C."/>
            <person name="Purnelle B."/>
            <person name="Quail M.A."/>
            <person name="Rabbinowitsch E."/>
            <person name="Reinhardt R."/>
            <person name="Rieger M."/>
            <person name="Rinta J."/>
            <person name="Robben J."/>
            <person name="Robertson L."/>
            <person name="Ruiz J.C."/>
            <person name="Rutter S."/>
            <person name="Saunders D."/>
            <person name="Schaefer M."/>
            <person name="Schein J."/>
            <person name="Schwartz D.C."/>
            <person name="Seeger K."/>
            <person name="Seyler A."/>
            <person name="Sharp S."/>
            <person name="Shin H."/>
            <person name="Sivam D."/>
            <person name="Squares R."/>
            <person name="Squares S."/>
            <person name="Tosato V."/>
            <person name="Vogt C."/>
            <person name="Volckaert G."/>
            <person name="Wambutt R."/>
            <person name="Warren T."/>
            <person name="Wedler H."/>
            <person name="Woodward J."/>
            <person name="Zhou S."/>
            <person name="Zimmermann W."/>
            <person name="Smith D.F."/>
            <person name="Blackwell J.M."/>
            <person name="Stuart K.D."/>
            <person name="Barrell B.G."/>
            <person name="Myler P.J."/>
        </authorList>
    </citation>
    <scope>NUCLEOTIDE SEQUENCE [LARGE SCALE GENOMIC DNA]</scope>
    <source>
        <strain>MHOM/IL/81/Friedlin</strain>
    </source>
</reference>
<sequence>MCPTAVPSRVSPVAAAAAADIAGSSESTVSLVADVDKKNSQYKQIFLERFRKKLQSDKTGMNNLESFVELPEGVAPSAASIGPIKRGSEPLPPWIKLKVPKGMTHRPRFNRIRRSMREKNLSTVCEEAKCPNIGECWGGSDEEGTATATIMVMGSHCTRGCRFCSVLTSRRPPPLDPEEPEKVAAAVHEMGVDYIVMTMVDRDDLPDGGASHVCCCIHTIKKKNPELMLEALVGDFHGDLKLVEQLAVTPLSVYAHNIECVERITPRVRDRRASYRQSLQTLEHVTKWTNGNMLTKSSIMLGLGEEEAEVRQTLRDLRTAGVSAVTLGQYLQPSHTRLKVSRYAHPKEFEMWEKEAMDMGFLYCASGPMVRSSYRAGEYYIKNILKQRQSAEGGKAAAAATAVNAGTAIA</sequence>
<feature type="chain" id="PRO_0000398238" description="Lipoyl synthase, mitochondrial">
    <location>
        <begin position="1"/>
        <end position="410"/>
    </location>
</feature>
<feature type="domain" description="Radical SAM core" evidence="2">
    <location>
        <begin position="140"/>
        <end position="362"/>
    </location>
</feature>
<feature type="binding site" evidence="1">
    <location>
        <position position="125"/>
    </location>
    <ligand>
        <name>[4Fe-4S] cluster</name>
        <dbReference type="ChEBI" id="CHEBI:49883"/>
        <label>1</label>
    </ligand>
</feature>
<feature type="binding site" evidence="1">
    <location>
        <position position="130"/>
    </location>
    <ligand>
        <name>[4Fe-4S] cluster</name>
        <dbReference type="ChEBI" id="CHEBI:49883"/>
        <label>1</label>
    </ligand>
</feature>
<feature type="binding site" evidence="1">
    <location>
        <position position="136"/>
    </location>
    <ligand>
        <name>[4Fe-4S] cluster</name>
        <dbReference type="ChEBI" id="CHEBI:49883"/>
        <label>1</label>
    </ligand>
</feature>
<feature type="binding site" evidence="1">
    <location>
        <position position="157"/>
    </location>
    <ligand>
        <name>[4Fe-4S] cluster</name>
        <dbReference type="ChEBI" id="CHEBI:49883"/>
        <label>2</label>
        <note>4Fe-4S-S-AdoMet</note>
    </ligand>
</feature>
<feature type="binding site" evidence="1">
    <location>
        <position position="161"/>
    </location>
    <ligand>
        <name>[4Fe-4S] cluster</name>
        <dbReference type="ChEBI" id="CHEBI:49883"/>
        <label>2</label>
        <note>4Fe-4S-S-AdoMet</note>
    </ligand>
</feature>
<feature type="binding site" evidence="1">
    <location>
        <position position="164"/>
    </location>
    <ligand>
        <name>[4Fe-4S] cluster</name>
        <dbReference type="ChEBI" id="CHEBI:49883"/>
        <label>2</label>
        <note>4Fe-4S-S-AdoMet</note>
    </ligand>
</feature>
<feature type="binding site" evidence="1">
    <location>
        <position position="373"/>
    </location>
    <ligand>
        <name>[4Fe-4S] cluster</name>
        <dbReference type="ChEBI" id="CHEBI:49883"/>
        <label>1</label>
    </ligand>
</feature>
<accession>Q4QDI6</accession>
<protein>
    <recommendedName>
        <fullName evidence="1">Lipoyl synthase, mitochondrial</fullName>
        <ecNumber evidence="1">2.8.1.8</ecNumber>
    </recommendedName>
    <alternativeName>
        <fullName evidence="1">Lipoate synthase</fullName>
        <shortName evidence="1">LS</shortName>
        <shortName evidence="1">Lip-syn</shortName>
    </alternativeName>
    <alternativeName>
        <fullName evidence="1">Lipoic acid synthase</fullName>
    </alternativeName>
</protein>
<proteinExistence type="inferred from homology"/>